<name>ATL58_ARATH</name>
<evidence type="ECO:0000250" key="1"/>
<evidence type="ECO:0000255" key="2"/>
<evidence type="ECO:0000255" key="3">
    <source>
        <dbReference type="PROSITE-ProRule" id="PRU00175"/>
    </source>
</evidence>
<evidence type="ECO:0000256" key="4">
    <source>
        <dbReference type="SAM" id="MobiDB-lite"/>
    </source>
</evidence>
<evidence type="ECO:0000305" key="5"/>
<organism>
    <name type="scientific">Arabidopsis thaliana</name>
    <name type="common">Mouse-ear cress</name>
    <dbReference type="NCBI Taxonomy" id="3702"/>
    <lineage>
        <taxon>Eukaryota</taxon>
        <taxon>Viridiplantae</taxon>
        <taxon>Streptophyta</taxon>
        <taxon>Embryophyta</taxon>
        <taxon>Tracheophyta</taxon>
        <taxon>Spermatophyta</taxon>
        <taxon>Magnoliopsida</taxon>
        <taxon>eudicotyledons</taxon>
        <taxon>Gunneridae</taxon>
        <taxon>Pentapetalae</taxon>
        <taxon>rosids</taxon>
        <taxon>malvids</taxon>
        <taxon>Brassicales</taxon>
        <taxon>Brassicaceae</taxon>
        <taxon>Camelineae</taxon>
        <taxon>Arabidopsis</taxon>
    </lineage>
</organism>
<dbReference type="EC" id="2.3.2.27" evidence="5"/>
<dbReference type="EMBL" id="AC051630">
    <property type="protein sequence ID" value="AAG51221.1"/>
    <property type="status" value="ALT_SEQ"/>
    <property type="molecule type" value="Genomic_DNA"/>
</dbReference>
<dbReference type="EMBL" id="CP002684">
    <property type="protein sequence ID" value="AEE31599.1"/>
    <property type="molecule type" value="Genomic_DNA"/>
</dbReference>
<dbReference type="EMBL" id="AK220582">
    <property type="protein sequence ID" value="BAD94869.1"/>
    <property type="molecule type" value="mRNA"/>
</dbReference>
<dbReference type="PIR" id="F86458">
    <property type="entry name" value="F86458"/>
</dbReference>
<dbReference type="RefSeq" id="NP_174614.2">
    <property type="nucleotide sequence ID" value="NM_103073.3"/>
</dbReference>
<dbReference type="SMR" id="Q570X5"/>
<dbReference type="FunCoup" id="Q570X5">
    <property type="interactions" value="10"/>
</dbReference>
<dbReference type="PaxDb" id="3702-AT1G33480.1"/>
<dbReference type="ProteomicsDB" id="246639"/>
<dbReference type="EnsemblPlants" id="AT1G33480.1">
    <property type="protein sequence ID" value="AT1G33480.1"/>
    <property type="gene ID" value="AT1G33480"/>
</dbReference>
<dbReference type="GeneID" id="840242"/>
<dbReference type="Gramene" id="AT1G33480.1">
    <property type="protein sequence ID" value="AT1G33480.1"/>
    <property type="gene ID" value="AT1G33480"/>
</dbReference>
<dbReference type="KEGG" id="ath:AT1G33480"/>
<dbReference type="Araport" id="AT1G33480"/>
<dbReference type="TAIR" id="AT1G33480">
    <property type="gene designation" value="ATL58"/>
</dbReference>
<dbReference type="eggNOG" id="KOG0800">
    <property type="taxonomic scope" value="Eukaryota"/>
</dbReference>
<dbReference type="HOGENOM" id="CLU_078082_0_0_1"/>
<dbReference type="InParanoid" id="Q570X5"/>
<dbReference type="OMA" id="EQQCDPN"/>
<dbReference type="PhylomeDB" id="Q570X5"/>
<dbReference type="UniPathway" id="UPA00143"/>
<dbReference type="PRO" id="PR:Q570X5"/>
<dbReference type="Proteomes" id="UP000006548">
    <property type="component" value="Chromosome 1"/>
</dbReference>
<dbReference type="ExpressionAtlas" id="Q570X5">
    <property type="expression patterns" value="baseline and differential"/>
</dbReference>
<dbReference type="GO" id="GO:0016020">
    <property type="term" value="C:membrane"/>
    <property type="evidence" value="ECO:0007669"/>
    <property type="project" value="UniProtKB-SubCell"/>
</dbReference>
<dbReference type="GO" id="GO:0016740">
    <property type="term" value="F:transferase activity"/>
    <property type="evidence" value="ECO:0007669"/>
    <property type="project" value="UniProtKB-KW"/>
</dbReference>
<dbReference type="GO" id="GO:0008270">
    <property type="term" value="F:zinc ion binding"/>
    <property type="evidence" value="ECO:0007669"/>
    <property type="project" value="UniProtKB-KW"/>
</dbReference>
<dbReference type="GO" id="GO:0016567">
    <property type="term" value="P:protein ubiquitination"/>
    <property type="evidence" value="ECO:0007669"/>
    <property type="project" value="UniProtKB-UniPathway"/>
</dbReference>
<dbReference type="CDD" id="cd16461">
    <property type="entry name" value="RING-H2_EL5-like"/>
    <property type="match status" value="1"/>
</dbReference>
<dbReference type="FunFam" id="3.30.40.10:FF:000503">
    <property type="entry name" value="RING-H2 finger protein ATL7"/>
    <property type="match status" value="1"/>
</dbReference>
<dbReference type="Gene3D" id="3.30.40.10">
    <property type="entry name" value="Zinc/RING finger domain, C3HC4 (zinc finger)"/>
    <property type="match status" value="1"/>
</dbReference>
<dbReference type="InterPro" id="IPR044600">
    <property type="entry name" value="ATL1/ATL16-like"/>
</dbReference>
<dbReference type="InterPro" id="IPR001841">
    <property type="entry name" value="Znf_RING"/>
</dbReference>
<dbReference type="InterPro" id="IPR013083">
    <property type="entry name" value="Znf_RING/FYVE/PHD"/>
</dbReference>
<dbReference type="PANTHER" id="PTHR46913:SF23">
    <property type="entry name" value="E3 UBIQUITIN-PROTEIN LIGASE RHA4A-RELATED"/>
    <property type="match status" value="1"/>
</dbReference>
<dbReference type="PANTHER" id="PTHR46913">
    <property type="entry name" value="RING-H2 FINGER PROTEIN ATL16"/>
    <property type="match status" value="1"/>
</dbReference>
<dbReference type="Pfam" id="PF13639">
    <property type="entry name" value="zf-RING_2"/>
    <property type="match status" value="1"/>
</dbReference>
<dbReference type="SMART" id="SM00184">
    <property type="entry name" value="RING"/>
    <property type="match status" value="1"/>
</dbReference>
<dbReference type="SUPFAM" id="SSF57850">
    <property type="entry name" value="RING/U-box"/>
    <property type="match status" value="1"/>
</dbReference>
<dbReference type="PROSITE" id="PS50089">
    <property type="entry name" value="ZF_RING_2"/>
    <property type="match status" value="1"/>
</dbReference>
<comment type="catalytic activity">
    <reaction evidence="5">
        <text>S-ubiquitinyl-[E2 ubiquitin-conjugating enzyme]-L-cysteine + [acceptor protein]-L-lysine = [E2 ubiquitin-conjugating enzyme]-L-cysteine + N(6)-ubiquitinyl-[acceptor protein]-L-lysine.</text>
        <dbReference type="EC" id="2.3.2.27"/>
    </reaction>
</comment>
<comment type="pathway">
    <text>Protein modification; protein ubiquitination.</text>
</comment>
<comment type="subcellular location">
    <subcellularLocation>
        <location evidence="5">Membrane</location>
        <topology evidence="5">Single-pass membrane protein</topology>
    </subcellularLocation>
</comment>
<comment type="domain">
    <text evidence="1">The RING-type zinc finger domain mediates binding to an E2 ubiquitin-conjugating enzyme.</text>
</comment>
<comment type="similarity">
    <text evidence="5">Belongs to the RING-type zinc finger family. ATL subfamily.</text>
</comment>
<comment type="sequence caution" evidence="5">
    <conflict type="erroneous gene model prediction">
        <sequence resource="EMBL-CDS" id="AAG51221"/>
    </conflict>
    <text>The predicted gene At1g33480 has been split into 2 genes: At1g33475 and At1g33480.</text>
</comment>
<keyword id="KW-0472">Membrane</keyword>
<keyword id="KW-0479">Metal-binding</keyword>
<keyword id="KW-1185">Reference proteome</keyword>
<keyword id="KW-0808">Transferase</keyword>
<keyword id="KW-0812">Transmembrane</keyword>
<keyword id="KW-1133">Transmembrane helix</keyword>
<keyword id="KW-0833">Ubl conjugation pathway</keyword>
<keyword id="KW-0862">Zinc</keyword>
<keyword id="KW-0863">Zinc-finger</keyword>
<reference key="1">
    <citation type="journal article" date="2000" name="Nature">
        <title>Sequence and analysis of chromosome 1 of the plant Arabidopsis thaliana.</title>
        <authorList>
            <person name="Theologis A."/>
            <person name="Ecker J.R."/>
            <person name="Palm C.J."/>
            <person name="Federspiel N.A."/>
            <person name="Kaul S."/>
            <person name="White O."/>
            <person name="Alonso J."/>
            <person name="Altafi H."/>
            <person name="Araujo R."/>
            <person name="Bowman C.L."/>
            <person name="Brooks S.Y."/>
            <person name="Buehler E."/>
            <person name="Chan A."/>
            <person name="Chao Q."/>
            <person name="Chen H."/>
            <person name="Cheuk R.F."/>
            <person name="Chin C.W."/>
            <person name="Chung M.K."/>
            <person name="Conn L."/>
            <person name="Conway A.B."/>
            <person name="Conway A.R."/>
            <person name="Creasy T.H."/>
            <person name="Dewar K."/>
            <person name="Dunn P."/>
            <person name="Etgu P."/>
            <person name="Feldblyum T.V."/>
            <person name="Feng J.-D."/>
            <person name="Fong B."/>
            <person name="Fujii C.Y."/>
            <person name="Gill J.E."/>
            <person name="Goldsmith A.D."/>
            <person name="Haas B."/>
            <person name="Hansen N.F."/>
            <person name="Hughes B."/>
            <person name="Huizar L."/>
            <person name="Hunter J.L."/>
            <person name="Jenkins J."/>
            <person name="Johnson-Hopson C."/>
            <person name="Khan S."/>
            <person name="Khaykin E."/>
            <person name="Kim C.J."/>
            <person name="Koo H.L."/>
            <person name="Kremenetskaia I."/>
            <person name="Kurtz D.B."/>
            <person name="Kwan A."/>
            <person name="Lam B."/>
            <person name="Langin-Hooper S."/>
            <person name="Lee A."/>
            <person name="Lee J.M."/>
            <person name="Lenz C.A."/>
            <person name="Li J.H."/>
            <person name="Li Y.-P."/>
            <person name="Lin X."/>
            <person name="Liu S.X."/>
            <person name="Liu Z.A."/>
            <person name="Luros J.S."/>
            <person name="Maiti R."/>
            <person name="Marziali A."/>
            <person name="Militscher J."/>
            <person name="Miranda M."/>
            <person name="Nguyen M."/>
            <person name="Nierman W.C."/>
            <person name="Osborne B.I."/>
            <person name="Pai G."/>
            <person name="Peterson J."/>
            <person name="Pham P.K."/>
            <person name="Rizzo M."/>
            <person name="Rooney T."/>
            <person name="Rowley D."/>
            <person name="Sakano H."/>
            <person name="Salzberg S.L."/>
            <person name="Schwartz J.R."/>
            <person name="Shinn P."/>
            <person name="Southwick A.M."/>
            <person name="Sun H."/>
            <person name="Tallon L.J."/>
            <person name="Tambunga G."/>
            <person name="Toriumi M.J."/>
            <person name="Town C.D."/>
            <person name="Utterback T."/>
            <person name="Van Aken S."/>
            <person name="Vaysberg M."/>
            <person name="Vysotskaia V.S."/>
            <person name="Walker M."/>
            <person name="Wu D."/>
            <person name="Yu G."/>
            <person name="Fraser C.M."/>
            <person name="Venter J.C."/>
            <person name="Davis R.W."/>
        </authorList>
    </citation>
    <scope>NUCLEOTIDE SEQUENCE [LARGE SCALE GENOMIC DNA]</scope>
    <source>
        <strain>cv. Columbia</strain>
    </source>
</reference>
<reference key="2">
    <citation type="journal article" date="2017" name="Plant J.">
        <title>Araport11: a complete reannotation of the Arabidopsis thaliana reference genome.</title>
        <authorList>
            <person name="Cheng C.Y."/>
            <person name="Krishnakumar V."/>
            <person name="Chan A.P."/>
            <person name="Thibaud-Nissen F."/>
            <person name="Schobel S."/>
            <person name="Town C.D."/>
        </authorList>
    </citation>
    <scope>GENOME REANNOTATION</scope>
    <source>
        <strain>cv. Columbia</strain>
    </source>
</reference>
<reference key="3">
    <citation type="submission" date="2005-03" db="EMBL/GenBank/DDBJ databases">
        <title>Large-scale analysis of RIKEN Arabidopsis full-length (RAFL) cDNAs.</title>
        <authorList>
            <person name="Totoki Y."/>
            <person name="Seki M."/>
            <person name="Ishida J."/>
            <person name="Nakajima M."/>
            <person name="Enju A."/>
            <person name="Kamiya A."/>
            <person name="Narusaka M."/>
            <person name="Shin-i T."/>
            <person name="Nakagawa M."/>
            <person name="Sakamoto N."/>
            <person name="Oishi K."/>
            <person name="Kohara Y."/>
            <person name="Kobayashi M."/>
            <person name="Toyoda A."/>
            <person name="Sakaki Y."/>
            <person name="Sakurai T."/>
            <person name="Iida K."/>
            <person name="Akiyama K."/>
            <person name="Satou M."/>
            <person name="Toyoda T."/>
            <person name="Konagaya A."/>
            <person name="Carninci P."/>
            <person name="Kawai J."/>
            <person name="Hayashizaki Y."/>
            <person name="Shinozaki K."/>
        </authorList>
    </citation>
    <scope>NUCLEOTIDE SEQUENCE [LARGE SCALE MRNA]</scope>
    <source>
        <strain>cv. Columbia</strain>
    </source>
</reference>
<reference key="4">
    <citation type="journal article" date="2002" name="Genome Biol.">
        <title>Evaluation and classification of RING-finger domains encoded by the Arabidopsis genome.</title>
        <authorList>
            <person name="Kosarev P."/>
            <person name="Mayer K.F.X."/>
            <person name="Hardtke C.S."/>
        </authorList>
    </citation>
    <scope>GENE FAMILY ORGANIZATION</scope>
</reference>
<reference key="5">
    <citation type="journal article" date="2006" name="J. Mol. Evol.">
        <title>The ATL gene family from Arabidopsis thaliana and Oryza sativa comprises a large number of putative ubiquitin ligases of the RING-H2 type.</title>
        <authorList>
            <person name="Serrano M."/>
            <person name="Parra S."/>
            <person name="Alcaraz L.D."/>
            <person name="Guzman P."/>
        </authorList>
    </citation>
    <scope>NOMENCLATURE</scope>
    <scope>GENE FAMILY ORGANIZATION</scope>
</reference>
<sequence>MSYSNSNPENYSAATSSPELKLYQAFIFSVPICFTFIILFLFYLIYLRRSSSDLSSLGMRTTFIPGNSLSTIELGLSKELREMLPIVVFKESFTVMDSQCSVCLGDYQPNDKLQQIPVCKHTFHMDCIDLWLTSHTTCPLCRLALIPSRSRQSQDDPVPSLVSPDEEVSSQPESEPVNHRVVSTQPESEPVNHSGVSSQPESQPVVNHRGVSSQPESQPVNHINDGHEQQCDQDVEGFKEMEEDERNNIGTSSACCSCRTG</sequence>
<accession>Q570X5</accession>
<accession>Q9C804</accession>
<proteinExistence type="evidence at transcript level"/>
<protein>
    <recommendedName>
        <fullName>RING-H2 finger protein ATL58</fullName>
        <ecNumber evidence="5">2.3.2.27</ecNumber>
    </recommendedName>
    <alternativeName>
        <fullName evidence="5">RING-type E3 ubiquitin transferase ATL58</fullName>
    </alternativeName>
</protein>
<feature type="chain" id="PRO_0000055765" description="RING-H2 finger protein ATL58">
    <location>
        <begin position="1"/>
        <end position="261"/>
    </location>
</feature>
<feature type="transmembrane region" description="Helical" evidence="2">
    <location>
        <begin position="25"/>
        <end position="45"/>
    </location>
</feature>
<feature type="zinc finger region" description="RING-type; atypical" evidence="3">
    <location>
        <begin position="100"/>
        <end position="142"/>
    </location>
</feature>
<feature type="region of interest" description="Disordered" evidence="4">
    <location>
        <begin position="149"/>
        <end position="227"/>
    </location>
</feature>
<feature type="region of interest" description="Disordered" evidence="4">
    <location>
        <begin position="241"/>
        <end position="261"/>
    </location>
</feature>
<feature type="compositionally biased region" description="Polar residues" evidence="4">
    <location>
        <begin position="194"/>
        <end position="221"/>
    </location>
</feature>
<gene>
    <name type="primary">ATL58</name>
    <name type="ordered locus">At1g33480</name>
    <name type="ORF">F10C21.23</name>
</gene>